<evidence type="ECO:0000255" key="1">
    <source>
        <dbReference type="HAMAP-Rule" id="MF_01495"/>
    </source>
</evidence>
<feature type="chain" id="PRO_0000077484" description="Photosystem II CP47 reaction center protein">
    <location>
        <begin position="1"/>
        <end position="508"/>
    </location>
</feature>
<feature type="transmembrane region" description="Helical" evidence="1">
    <location>
        <begin position="21"/>
        <end position="36"/>
    </location>
</feature>
<feature type="transmembrane region" description="Helical" evidence="1">
    <location>
        <begin position="101"/>
        <end position="115"/>
    </location>
</feature>
<feature type="transmembrane region" description="Helical" evidence="1">
    <location>
        <begin position="140"/>
        <end position="156"/>
    </location>
</feature>
<feature type="transmembrane region" description="Helical" evidence="1">
    <location>
        <begin position="203"/>
        <end position="218"/>
    </location>
</feature>
<feature type="transmembrane region" description="Helical" evidence="1">
    <location>
        <begin position="237"/>
        <end position="252"/>
    </location>
</feature>
<feature type="transmembrane region" description="Helical" evidence="1">
    <location>
        <begin position="457"/>
        <end position="472"/>
    </location>
</feature>
<sequence>MGLPWYRVHTVVLNDPGRLLAVHIMHTALVAGWAGSMALYELAVFDPSDPVLDPMWRQGMFVIPFMTRLGITNSWGGWNITGGTITNPGIWSYEGVAGAHIVFSGLCFLAAIWHWVYWDLEIFSDERTGKPSLDLPKIFGIHLFLAGLACFGFGAFHVTGLYGPGIWVSDPYGLTGRVQPVNPAWGVEGFDPFVPGGVASHHIAAGTLGILAGLFHLSVRPPQRLYKGLRMGNIETVLSSSIAAVFFAAFVVAGTMWYGSATTPIELFGPTRYQWDQGYFQQEIYRRVGAGLAENQSFSEAWSKIPEKLAFYDYIGNNPAKGGLFRAGSMDNGDGIAVGWLGHPIFRDKEGRELFVRRMPTFFETFPVVLVDGDGIVRADVPFRRAESKYSVEQVGVTVEFYGGELNGVSYSDPATVKKYARRAQLGEIFELDRATLKSDGVFRSSPRGWFTFGHASFALLFFFGHIWHGSRTLFRDVFAGIDPDLDSQVEFGAFQKLGDPTTRRQVV</sequence>
<keyword id="KW-0148">Chlorophyll</keyword>
<keyword id="KW-0150">Chloroplast</keyword>
<keyword id="KW-0157">Chromophore</keyword>
<keyword id="KW-0472">Membrane</keyword>
<keyword id="KW-0602">Photosynthesis</keyword>
<keyword id="KW-0604">Photosystem II</keyword>
<keyword id="KW-0934">Plastid</keyword>
<keyword id="KW-0793">Thylakoid</keyword>
<keyword id="KW-0812">Transmembrane</keyword>
<keyword id="KW-1133">Transmembrane helix</keyword>
<geneLocation type="chloroplast"/>
<organism>
    <name type="scientific">Lotus japonicus</name>
    <name type="common">Lotus corniculatus var. japonicus</name>
    <dbReference type="NCBI Taxonomy" id="34305"/>
    <lineage>
        <taxon>Eukaryota</taxon>
        <taxon>Viridiplantae</taxon>
        <taxon>Streptophyta</taxon>
        <taxon>Embryophyta</taxon>
        <taxon>Tracheophyta</taxon>
        <taxon>Spermatophyta</taxon>
        <taxon>Magnoliopsida</taxon>
        <taxon>eudicotyledons</taxon>
        <taxon>Gunneridae</taxon>
        <taxon>Pentapetalae</taxon>
        <taxon>rosids</taxon>
        <taxon>fabids</taxon>
        <taxon>Fabales</taxon>
        <taxon>Fabaceae</taxon>
        <taxon>Papilionoideae</taxon>
        <taxon>50 kb inversion clade</taxon>
        <taxon>NPAAA clade</taxon>
        <taxon>Hologalegina</taxon>
        <taxon>robinioid clade</taxon>
        <taxon>Loteae</taxon>
        <taxon>Lotus</taxon>
    </lineage>
</organism>
<protein>
    <recommendedName>
        <fullName evidence="1">Photosystem II CP47 reaction center protein</fullName>
    </recommendedName>
    <alternativeName>
        <fullName evidence="1">PSII 47 kDa protein</fullName>
    </alternativeName>
    <alternativeName>
        <fullName evidence="1">Protein CP-47</fullName>
    </alternativeName>
</protein>
<name>PSBB_LOTJA</name>
<accession>Q9BBQ8</accession>
<dbReference type="EMBL" id="AP002983">
    <property type="protein sequence ID" value="BAB33222.1"/>
    <property type="molecule type" value="Genomic_DNA"/>
</dbReference>
<dbReference type="RefSeq" id="NP_084823.1">
    <property type="nucleotide sequence ID" value="NC_002694.1"/>
</dbReference>
<dbReference type="SMR" id="Q9BBQ8"/>
<dbReference type="GeneID" id="802895"/>
<dbReference type="GO" id="GO:0009535">
    <property type="term" value="C:chloroplast thylakoid membrane"/>
    <property type="evidence" value="ECO:0007669"/>
    <property type="project" value="UniProtKB-SubCell"/>
</dbReference>
<dbReference type="GO" id="GO:0009523">
    <property type="term" value="C:photosystem II"/>
    <property type="evidence" value="ECO:0007669"/>
    <property type="project" value="UniProtKB-KW"/>
</dbReference>
<dbReference type="GO" id="GO:0016168">
    <property type="term" value="F:chlorophyll binding"/>
    <property type="evidence" value="ECO:0007669"/>
    <property type="project" value="UniProtKB-UniRule"/>
</dbReference>
<dbReference type="GO" id="GO:0045156">
    <property type="term" value="F:electron transporter, transferring electrons within the cyclic electron transport pathway of photosynthesis activity"/>
    <property type="evidence" value="ECO:0007669"/>
    <property type="project" value="InterPro"/>
</dbReference>
<dbReference type="GO" id="GO:0009772">
    <property type="term" value="P:photosynthetic electron transport in photosystem II"/>
    <property type="evidence" value="ECO:0007669"/>
    <property type="project" value="InterPro"/>
</dbReference>
<dbReference type="FunFam" id="3.10.680.10:FF:000001">
    <property type="entry name" value="Photosystem II CP47 reaction center protein"/>
    <property type="match status" value="1"/>
</dbReference>
<dbReference type="Gene3D" id="3.10.680.10">
    <property type="entry name" value="Photosystem II CP47 reaction center protein"/>
    <property type="match status" value="1"/>
</dbReference>
<dbReference type="HAMAP" id="MF_01495">
    <property type="entry name" value="PSII_PsbB_CP47"/>
    <property type="match status" value="1"/>
</dbReference>
<dbReference type="InterPro" id="IPR000932">
    <property type="entry name" value="PS_antenna-like"/>
</dbReference>
<dbReference type="InterPro" id="IPR036001">
    <property type="entry name" value="PS_II_antenna-like_sf"/>
</dbReference>
<dbReference type="InterPro" id="IPR017486">
    <property type="entry name" value="PSII_PsbB"/>
</dbReference>
<dbReference type="NCBIfam" id="TIGR03039">
    <property type="entry name" value="PS_II_CP47"/>
    <property type="match status" value="1"/>
</dbReference>
<dbReference type="PANTHER" id="PTHR33180">
    <property type="entry name" value="PHOTOSYSTEM II CP43 REACTION CENTER PROTEIN"/>
    <property type="match status" value="1"/>
</dbReference>
<dbReference type="PANTHER" id="PTHR33180:SF38">
    <property type="entry name" value="PHOTOSYSTEM II CP47 REACTION CENTER PROTEIN"/>
    <property type="match status" value="1"/>
</dbReference>
<dbReference type="Pfam" id="PF00421">
    <property type="entry name" value="PSII"/>
    <property type="match status" value="1"/>
</dbReference>
<dbReference type="SUPFAM" id="SSF161077">
    <property type="entry name" value="Photosystem II antenna protein-like"/>
    <property type="match status" value="1"/>
</dbReference>
<reference key="1">
    <citation type="journal article" date="2000" name="DNA Res.">
        <title>Complete structure of the chloroplast genome of a legume, Lotus japonicus.</title>
        <authorList>
            <person name="Kato T."/>
            <person name="Kaneko T."/>
            <person name="Sato S."/>
            <person name="Nakamura Y."/>
            <person name="Tabata S."/>
        </authorList>
    </citation>
    <scope>NUCLEOTIDE SEQUENCE [LARGE SCALE GENOMIC DNA]</scope>
    <source>
        <strain>cv. Miyakojima MG-20</strain>
    </source>
</reference>
<proteinExistence type="inferred from homology"/>
<gene>
    <name evidence="1" type="primary">psbB</name>
</gene>
<comment type="function">
    <text evidence="1">One of the components of the core complex of photosystem II (PSII). It binds chlorophyll and helps catalyze the primary light-induced photochemical processes of PSII. PSII is a light-driven water:plastoquinone oxidoreductase, using light energy to abstract electrons from H(2)O, generating O(2) and a proton gradient subsequently used for ATP formation.</text>
</comment>
<comment type="cofactor">
    <text evidence="1">Binds multiple chlorophylls. PSII binds additional chlorophylls, carotenoids and specific lipids.</text>
</comment>
<comment type="subunit">
    <text evidence="1">PSII is composed of 1 copy each of membrane proteins PsbA, PsbB, PsbC, PsbD, PsbE, PsbF, PsbH, PsbI, PsbJ, PsbK, PsbL, PsbM, PsbT, PsbX, PsbY, PsbZ, Psb30/Ycf12, at least 3 peripheral proteins of the oxygen-evolving complex and a large number of cofactors. It forms dimeric complexes.</text>
</comment>
<comment type="subcellular location">
    <subcellularLocation>
        <location evidence="1">Plastid</location>
        <location evidence="1">Chloroplast thylakoid membrane</location>
        <topology evidence="1">Multi-pass membrane protein</topology>
    </subcellularLocation>
</comment>
<comment type="similarity">
    <text evidence="1">Belongs to the PsbB/PsbC family. PsbB subfamily.</text>
</comment>